<sequence length="274" mass="29919">MRKIAIYGKGGIGKSTTTQNTVAGLAEMGNKVMVVGCDPKADSTRLLLGGLTQKTVLDTLREEGEDVELEDIIKEGYGASRCTESGGPEPGVGCAGRGIITSVNLLEQLGAYDDEWGLDYVFYDVLGDVVCGGFAMPIRDGKAQEIYIVVSGEMMAMYAANNICKGILKYADAGGVRLGGLICNSRKVDNEREMIEELARQLGTQMIHFVPRDNMVQRAEINRKTVIDFDPSHNQADEYRALATKIDQNEMFVIPKPLEIEELEKLLIDFGIAN</sequence>
<organism>
    <name type="scientific">Prosthecochloris aestuarii (strain DSM 271 / SK 413)</name>
    <dbReference type="NCBI Taxonomy" id="290512"/>
    <lineage>
        <taxon>Bacteria</taxon>
        <taxon>Pseudomonadati</taxon>
        <taxon>Chlorobiota</taxon>
        <taxon>Chlorobiia</taxon>
        <taxon>Chlorobiales</taxon>
        <taxon>Chlorobiaceae</taxon>
        <taxon>Prosthecochloris</taxon>
    </lineage>
</organism>
<name>NIFH_PROA2</name>
<dbReference type="EC" id="1.18.6.1" evidence="1"/>
<dbReference type="EMBL" id="CP001108">
    <property type="protein sequence ID" value="ACF46645.1"/>
    <property type="molecule type" value="Genomic_DNA"/>
</dbReference>
<dbReference type="RefSeq" id="WP_012506178.1">
    <property type="nucleotide sequence ID" value="NC_011059.1"/>
</dbReference>
<dbReference type="SMR" id="B4S9H5"/>
<dbReference type="STRING" id="290512.Paes_1627"/>
<dbReference type="KEGG" id="paa:Paes_1627"/>
<dbReference type="eggNOG" id="COG1348">
    <property type="taxonomic scope" value="Bacteria"/>
</dbReference>
<dbReference type="HOGENOM" id="CLU_059373_0_0_10"/>
<dbReference type="Proteomes" id="UP000002725">
    <property type="component" value="Chromosome"/>
</dbReference>
<dbReference type="GO" id="GO:0051539">
    <property type="term" value="F:4 iron, 4 sulfur cluster binding"/>
    <property type="evidence" value="ECO:0007669"/>
    <property type="project" value="UniProtKB-KW"/>
</dbReference>
<dbReference type="GO" id="GO:0005524">
    <property type="term" value="F:ATP binding"/>
    <property type="evidence" value="ECO:0007669"/>
    <property type="project" value="UniProtKB-UniRule"/>
</dbReference>
<dbReference type="GO" id="GO:0046872">
    <property type="term" value="F:metal ion binding"/>
    <property type="evidence" value="ECO:0007669"/>
    <property type="project" value="UniProtKB-KW"/>
</dbReference>
<dbReference type="GO" id="GO:0016163">
    <property type="term" value="F:nitrogenase activity"/>
    <property type="evidence" value="ECO:0007669"/>
    <property type="project" value="UniProtKB-UniRule"/>
</dbReference>
<dbReference type="GO" id="GO:0009399">
    <property type="term" value="P:nitrogen fixation"/>
    <property type="evidence" value="ECO:0007669"/>
    <property type="project" value="UniProtKB-UniRule"/>
</dbReference>
<dbReference type="CDD" id="cd02040">
    <property type="entry name" value="NifH"/>
    <property type="match status" value="1"/>
</dbReference>
<dbReference type="Gene3D" id="3.40.50.300">
    <property type="entry name" value="P-loop containing nucleotide triphosphate hydrolases"/>
    <property type="match status" value="1"/>
</dbReference>
<dbReference type="HAMAP" id="MF_00533">
    <property type="entry name" value="NifH"/>
    <property type="match status" value="1"/>
</dbReference>
<dbReference type="InterPro" id="IPR030655">
    <property type="entry name" value="NifH/chlL_CS"/>
</dbReference>
<dbReference type="InterPro" id="IPR000392">
    <property type="entry name" value="NifH/frxC"/>
</dbReference>
<dbReference type="InterPro" id="IPR005977">
    <property type="entry name" value="Nitrogenase_Fe_NifH"/>
</dbReference>
<dbReference type="InterPro" id="IPR027417">
    <property type="entry name" value="P-loop_NTPase"/>
</dbReference>
<dbReference type="NCBIfam" id="TIGR01287">
    <property type="entry name" value="nifH"/>
    <property type="match status" value="1"/>
</dbReference>
<dbReference type="PANTHER" id="PTHR42864">
    <property type="entry name" value="LIGHT-INDEPENDENT PROTOCHLOROPHYLLIDE REDUCTASE IRON-SULFUR ATP-BINDING PROTEIN"/>
    <property type="match status" value="1"/>
</dbReference>
<dbReference type="PANTHER" id="PTHR42864:SF2">
    <property type="entry name" value="LIGHT-INDEPENDENT PROTOCHLOROPHYLLIDE REDUCTASE IRON-SULFUR ATP-BINDING PROTEIN"/>
    <property type="match status" value="1"/>
</dbReference>
<dbReference type="Pfam" id="PF00142">
    <property type="entry name" value="Fer4_NifH"/>
    <property type="match status" value="1"/>
</dbReference>
<dbReference type="PIRSF" id="PIRSF000363">
    <property type="entry name" value="Nitrogenase_iron"/>
    <property type="match status" value="1"/>
</dbReference>
<dbReference type="PRINTS" id="PR00091">
    <property type="entry name" value="NITROGNASEII"/>
</dbReference>
<dbReference type="SUPFAM" id="SSF52540">
    <property type="entry name" value="P-loop containing nucleoside triphosphate hydrolases"/>
    <property type="match status" value="1"/>
</dbReference>
<dbReference type="PROSITE" id="PS00746">
    <property type="entry name" value="NIFH_FRXC_1"/>
    <property type="match status" value="1"/>
</dbReference>
<dbReference type="PROSITE" id="PS00692">
    <property type="entry name" value="NIFH_FRXC_2"/>
    <property type="match status" value="1"/>
</dbReference>
<dbReference type="PROSITE" id="PS51026">
    <property type="entry name" value="NIFH_FRXC_3"/>
    <property type="match status" value="1"/>
</dbReference>
<gene>
    <name evidence="1" type="primary">nifH</name>
    <name type="ordered locus">Paes_1627</name>
</gene>
<protein>
    <recommendedName>
        <fullName evidence="1">Nitrogenase iron protein</fullName>
        <ecNumber evidence="1">1.18.6.1</ecNumber>
    </recommendedName>
    <alternativeName>
        <fullName evidence="1">Nitrogenase Fe protein</fullName>
    </alternativeName>
    <alternativeName>
        <fullName evidence="1">Nitrogenase component II</fullName>
    </alternativeName>
    <alternativeName>
        <fullName evidence="1">Nitrogenase reductase</fullName>
    </alternativeName>
</protein>
<keyword id="KW-0004">4Fe-4S</keyword>
<keyword id="KW-0013">ADP-ribosylation</keyword>
<keyword id="KW-0067">ATP-binding</keyword>
<keyword id="KW-0408">Iron</keyword>
<keyword id="KW-0411">Iron-sulfur</keyword>
<keyword id="KW-0479">Metal-binding</keyword>
<keyword id="KW-0535">Nitrogen fixation</keyword>
<keyword id="KW-0547">Nucleotide-binding</keyword>
<keyword id="KW-0560">Oxidoreductase</keyword>
<feature type="chain" id="PRO_1000211880" description="Nitrogenase iron protein">
    <location>
        <begin position="1"/>
        <end position="274"/>
    </location>
</feature>
<feature type="binding site" evidence="1">
    <location>
        <begin position="8"/>
        <end position="15"/>
    </location>
    <ligand>
        <name>ATP</name>
        <dbReference type="ChEBI" id="CHEBI:30616"/>
    </ligand>
</feature>
<feature type="binding site" evidence="1">
    <location>
        <position position="94"/>
    </location>
    <ligand>
        <name>[4Fe-4S] cluster</name>
        <dbReference type="ChEBI" id="CHEBI:49883"/>
        <note>ligand shared between dimeric partners</note>
    </ligand>
</feature>
<feature type="binding site" evidence="1">
    <location>
        <position position="131"/>
    </location>
    <ligand>
        <name>[4Fe-4S] cluster</name>
        <dbReference type="ChEBI" id="CHEBI:49883"/>
        <note>ligand shared between dimeric partners</note>
    </ligand>
</feature>
<feature type="modified residue" description="ADP-ribosylarginine; by dinitrogenase reductase ADP-ribosyltransferase" evidence="1">
    <location>
        <position position="97"/>
    </location>
</feature>
<accession>B4S9H5</accession>
<evidence type="ECO:0000255" key="1">
    <source>
        <dbReference type="HAMAP-Rule" id="MF_00533"/>
    </source>
</evidence>
<comment type="function">
    <text evidence="1">The key enzymatic reactions in nitrogen fixation are catalyzed by the nitrogenase complex, which has 2 components: the iron protein and the molybdenum-iron protein.</text>
</comment>
<comment type="catalytic activity">
    <reaction evidence="1">
        <text>N2 + 8 reduced [2Fe-2S]-[ferredoxin] + 16 ATP + 16 H2O = H2 + 8 oxidized [2Fe-2S]-[ferredoxin] + 2 NH4(+) + 16 ADP + 16 phosphate + 6 H(+)</text>
        <dbReference type="Rhea" id="RHEA:21448"/>
        <dbReference type="Rhea" id="RHEA-COMP:10000"/>
        <dbReference type="Rhea" id="RHEA-COMP:10001"/>
        <dbReference type="ChEBI" id="CHEBI:15377"/>
        <dbReference type="ChEBI" id="CHEBI:15378"/>
        <dbReference type="ChEBI" id="CHEBI:17997"/>
        <dbReference type="ChEBI" id="CHEBI:18276"/>
        <dbReference type="ChEBI" id="CHEBI:28938"/>
        <dbReference type="ChEBI" id="CHEBI:30616"/>
        <dbReference type="ChEBI" id="CHEBI:33737"/>
        <dbReference type="ChEBI" id="CHEBI:33738"/>
        <dbReference type="ChEBI" id="CHEBI:43474"/>
        <dbReference type="ChEBI" id="CHEBI:456216"/>
        <dbReference type="EC" id="1.18.6.1"/>
    </reaction>
</comment>
<comment type="cofactor">
    <cofactor evidence="1">
        <name>[4Fe-4S] cluster</name>
        <dbReference type="ChEBI" id="CHEBI:49883"/>
    </cofactor>
    <text evidence="1">Binds 1 [4Fe-4S] cluster per dimer.</text>
</comment>
<comment type="subunit">
    <text evidence="1">Homodimer.</text>
</comment>
<comment type="PTM">
    <text evidence="1">The reversible ADP-ribosylation of Arg-97 inactivates the nitrogenase reductase and regulates nitrogenase activity.</text>
</comment>
<comment type="similarity">
    <text evidence="1">Belongs to the NifH/BchL/ChlL family.</text>
</comment>
<proteinExistence type="inferred from homology"/>
<reference key="1">
    <citation type="submission" date="2008-06" db="EMBL/GenBank/DDBJ databases">
        <title>Complete sequence of chromosome of Prosthecochloris aestuarii DSM 271.</title>
        <authorList>
            <consortium name="US DOE Joint Genome Institute"/>
            <person name="Lucas S."/>
            <person name="Copeland A."/>
            <person name="Lapidus A."/>
            <person name="Glavina del Rio T."/>
            <person name="Dalin E."/>
            <person name="Tice H."/>
            <person name="Bruce D."/>
            <person name="Goodwin L."/>
            <person name="Pitluck S."/>
            <person name="Schmutz J."/>
            <person name="Larimer F."/>
            <person name="Land M."/>
            <person name="Hauser L."/>
            <person name="Kyrpides N."/>
            <person name="Anderson I."/>
            <person name="Liu Z."/>
            <person name="Li T."/>
            <person name="Zhao F."/>
            <person name="Overmann J."/>
            <person name="Bryant D.A."/>
            <person name="Richardson P."/>
        </authorList>
    </citation>
    <scope>NUCLEOTIDE SEQUENCE [LARGE SCALE GENOMIC DNA]</scope>
    <source>
        <strain>DSM 271 / SK 413</strain>
    </source>
</reference>